<protein>
    <recommendedName>
        <fullName evidence="4">Glycerophosphocholine permease GIT4</fullName>
        <shortName evidence="4">GroPCho permease GIT4</shortName>
    </recommendedName>
    <alternativeName>
        <fullName evidence="5">Glycerophosphodiester transporter GIT4</fullName>
    </alternativeName>
</protein>
<evidence type="ECO:0000255" key="1"/>
<evidence type="ECO:0000255" key="2">
    <source>
        <dbReference type="PROSITE-ProRule" id="PRU00498"/>
    </source>
</evidence>
<evidence type="ECO:0000269" key="3">
    <source>
    </source>
</evidence>
<evidence type="ECO:0000303" key="4">
    <source>
    </source>
</evidence>
<evidence type="ECO:0000305" key="5"/>
<evidence type="ECO:0000305" key="6">
    <source>
    </source>
</evidence>
<comment type="function">
    <text evidence="3">Glycerophosphodiester transporter that mediates uptake of glycerophosphocholine (GroPCho) with GIT3 (PubMed:24114876). Does not possess detectable glycerophosphoinositol (GroPIns) transport activity (PubMed:24114876). The expanded ability to utilize GroPIns and GroPCho results from the organism's pathogenic nature and its need to occupy a variety of environments within its host organism (PubMed:24114876). This possibility is buttressed by the fact that GroPIns and GroPCho are present and abundant in human fluids (PubMed:24114876).</text>
</comment>
<comment type="catalytic activity">
    <reaction evidence="3">
        <text>sn-glycerol 3-phosphocholine(out) = sn-glycerol 3-phosphocholine(in)</text>
        <dbReference type="Rhea" id="RHEA:32911"/>
        <dbReference type="ChEBI" id="CHEBI:16870"/>
    </reaction>
    <physiologicalReaction direction="left-to-right" evidence="3">
        <dbReference type="Rhea" id="RHEA:32912"/>
    </physiologicalReaction>
</comment>
<comment type="biophysicochemical properties">
    <kinetics>
        <KM evidence="3">16 uM for glycerophosphocholine transport</KM>
    </kinetics>
</comment>
<comment type="subcellular location">
    <subcellularLocation>
        <location evidence="6">Cell membrane</location>
        <topology evidence="1">Multi-pass membrane protein</topology>
    </subcellularLocation>
</comment>
<comment type="induction">
    <text>Expression is positively regulated by the transcription factor PHO4 (PubMed:24114876).</text>
</comment>
<comment type="disruption phenotype">
    <text evidence="3">Triple deletion of GIT2, GIT3 and GIT4 impairs the uptake of glycerophosphocholine (GroPCho) and reduces virulence in a mouse model of blood stream infection (PubMed:24114876).</text>
</comment>
<comment type="similarity">
    <text evidence="5">Belongs to the major facilitator superfamily. Sugar transporter (TC 2.A.1.1) family.</text>
</comment>
<name>GIT4_CANAL</name>
<sequence>MATRDLPHSVGDFCFGWVDQIRSEITLGKSQDQLIKEDVLEDDETVETKVEIKNLWPAFASGAGLFSDGYVNAGISTVLSCLKKIYGDEFTKSNAMNNIGSIGFVGTVVGQLSFGYISDNFDRKTGMLTANVMLIFFTLMCAVASWGTTVQGFFACLTVWRFFLGIAIGAEYPTSSVIASEFANQLPSGHRNRYFSWFTNAMIDFGFVVSSFVPLVLLWIFTPRHLRAVWRLSIGLGVIPPLILFFIRLKMDNSKSFKKMNMKRVNYSKYPWWLIIKFYWFRLTVVSLIWFIYDFSVYSFGTFNTIIIGEVIPNGTLYENWGWSVVFNLFYMPGAFLGAFIGDYLGPRLTLAIGVGAQGIIGIAMSACLKSLKKHVAGFVVVFGIFSTFGEFGPGNNTGLLASKTCASSIRGQYYGIAAAIGKIGAFVGTWVFPAIQKHYAYSEDLSLQVPFYVSSALCLFSAFLTIFFVPPVGQDAINKEDRLFKEYLEENGVDIRLLGDSGVVTQYQEDEDIGVISDEKDDTVKVQQKNV</sequence>
<reference key="1">
    <citation type="journal article" date="2004" name="Proc. Natl. Acad. Sci. U.S.A.">
        <title>The diploid genome sequence of Candida albicans.</title>
        <authorList>
            <person name="Jones T."/>
            <person name="Federspiel N.A."/>
            <person name="Chibana H."/>
            <person name="Dungan J."/>
            <person name="Kalman S."/>
            <person name="Magee B.B."/>
            <person name="Newport G."/>
            <person name="Thorstenson Y.R."/>
            <person name="Agabian N."/>
            <person name="Magee P.T."/>
            <person name="Davis R.W."/>
            <person name="Scherer S."/>
        </authorList>
    </citation>
    <scope>NUCLEOTIDE SEQUENCE [LARGE SCALE GENOMIC DNA]</scope>
    <source>
        <strain>SC5314 / ATCC MYA-2876</strain>
    </source>
</reference>
<reference key="2">
    <citation type="journal article" date="2007" name="Genome Biol.">
        <title>Assembly of the Candida albicans genome into sixteen supercontigs aligned on the eight chromosomes.</title>
        <authorList>
            <person name="van het Hoog M."/>
            <person name="Rast T.J."/>
            <person name="Martchenko M."/>
            <person name="Grindle S."/>
            <person name="Dignard D."/>
            <person name="Hogues H."/>
            <person name="Cuomo C."/>
            <person name="Berriman M."/>
            <person name="Scherer S."/>
            <person name="Magee B.B."/>
            <person name="Whiteway M."/>
            <person name="Chibana H."/>
            <person name="Nantel A."/>
            <person name="Magee P.T."/>
        </authorList>
    </citation>
    <scope>GENOME REANNOTATION</scope>
    <source>
        <strain>SC5314 / ATCC MYA-2876</strain>
    </source>
</reference>
<reference key="3">
    <citation type="journal article" date="2013" name="Genome Biol.">
        <title>Assembly of a phased diploid Candida albicans genome facilitates allele-specific measurements and provides a simple model for repeat and indel structure.</title>
        <authorList>
            <person name="Muzzey D."/>
            <person name="Schwartz K."/>
            <person name="Weissman J.S."/>
            <person name="Sherlock G."/>
        </authorList>
    </citation>
    <scope>NUCLEOTIDE SEQUENCE [LARGE SCALE GENOMIC DNA]</scope>
    <scope>GENOME REANNOTATION</scope>
    <source>
        <strain>SC5314 / ATCC MYA-2876</strain>
    </source>
</reference>
<reference key="4">
    <citation type="journal article" date="2013" name="J. Biol. Chem.">
        <title>Glycerophosphocholine utilization by Candida albicans: role of the Git3 transporter in virulence.</title>
        <authorList>
            <person name="Bishop A.C."/>
            <person name="Ganguly S."/>
            <person name="Solis N.V."/>
            <person name="Cooley B.M."/>
            <person name="Jensen-Seaman M.I."/>
            <person name="Filler S.G."/>
            <person name="Mitchell A.P."/>
            <person name="Patton-Vogt J."/>
        </authorList>
    </citation>
    <scope>FUNCTION</scope>
    <scope>DISRUPTION PHENOTYPE</scope>
    <scope>INDUCTION</scope>
    <scope>BIOPHYSICOCHEMICAL PROPERTIES</scope>
</reference>
<dbReference type="EMBL" id="CP017627">
    <property type="protein sequence ID" value="AOW29529.1"/>
    <property type="molecule type" value="Genomic_DNA"/>
</dbReference>
<dbReference type="RefSeq" id="XP_715742.2">
    <property type="nucleotide sequence ID" value="XM_710649.2"/>
</dbReference>
<dbReference type="SMR" id="A0A1D8PN14"/>
<dbReference type="STRING" id="237561.A0A1D8PN14"/>
<dbReference type="GlyCosmos" id="A0A1D8PN14">
    <property type="glycosylation" value="3 sites, No reported glycans"/>
</dbReference>
<dbReference type="PeptideAtlas" id="A0A1D8PN14"/>
<dbReference type="EnsemblFungi" id="C5_00870C_A-T">
    <property type="protein sequence ID" value="C5_00870C_A-T-p1"/>
    <property type="gene ID" value="C5_00870C_A"/>
</dbReference>
<dbReference type="GeneID" id="3642635"/>
<dbReference type="KEGG" id="cal:CAALFM_C500870CA"/>
<dbReference type="CGD" id="CAL0000176164">
    <property type="gene designation" value="GIT4"/>
</dbReference>
<dbReference type="VEuPathDB" id="FungiDB:C5_00870C_A"/>
<dbReference type="eggNOG" id="KOG0252">
    <property type="taxonomic scope" value="Eukaryota"/>
</dbReference>
<dbReference type="InParanoid" id="A0A1D8PN14"/>
<dbReference type="OrthoDB" id="2261376at2759"/>
<dbReference type="Proteomes" id="UP000000559">
    <property type="component" value="Chromosome 5"/>
</dbReference>
<dbReference type="GO" id="GO:0005886">
    <property type="term" value="C:plasma membrane"/>
    <property type="evidence" value="ECO:0000318"/>
    <property type="project" value="GO_Central"/>
</dbReference>
<dbReference type="GO" id="GO:0046943">
    <property type="term" value="F:carboxylic acid transmembrane transporter activity"/>
    <property type="evidence" value="ECO:0000318"/>
    <property type="project" value="GO_Central"/>
</dbReference>
<dbReference type="GO" id="GO:0001406">
    <property type="term" value="F:glycerophosphodiester transmembrane transporter activity"/>
    <property type="evidence" value="ECO:0000315"/>
    <property type="project" value="CGD"/>
</dbReference>
<dbReference type="GO" id="GO:0046942">
    <property type="term" value="P:carboxylic acid transport"/>
    <property type="evidence" value="ECO:0000318"/>
    <property type="project" value="GO_Central"/>
</dbReference>
<dbReference type="GO" id="GO:0001407">
    <property type="term" value="P:glycerophosphodiester transmembrane transport"/>
    <property type="evidence" value="ECO:0000315"/>
    <property type="project" value="CGD"/>
</dbReference>
<dbReference type="FunFam" id="1.20.1250.20:FF:000140">
    <property type="entry name" value="Putative MFS phospholipid transporter"/>
    <property type="match status" value="1"/>
</dbReference>
<dbReference type="Gene3D" id="1.20.1250.20">
    <property type="entry name" value="MFS general substrate transporter like domains"/>
    <property type="match status" value="1"/>
</dbReference>
<dbReference type="InterPro" id="IPR020846">
    <property type="entry name" value="MFS_dom"/>
</dbReference>
<dbReference type="InterPro" id="IPR005828">
    <property type="entry name" value="MFS_sugar_transport-like"/>
</dbReference>
<dbReference type="InterPro" id="IPR036259">
    <property type="entry name" value="MFS_trans_sf"/>
</dbReference>
<dbReference type="PANTHER" id="PTHR23508">
    <property type="entry name" value="CARBOXYLIC ACID TRANSPORTER PROTEIN HOMOLOG"/>
    <property type="match status" value="1"/>
</dbReference>
<dbReference type="PANTHER" id="PTHR23508:SF10">
    <property type="entry name" value="CARBOXYLIC ACID TRANSPORTER PROTEIN HOMOLOG"/>
    <property type="match status" value="1"/>
</dbReference>
<dbReference type="Pfam" id="PF00083">
    <property type="entry name" value="Sugar_tr"/>
    <property type="match status" value="2"/>
</dbReference>
<dbReference type="SUPFAM" id="SSF103473">
    <property type="entry name" value="MFS general substrate transporter"/>
    <property type="match status" value="1"/>
</dbReference>
<dbReference type="PROSITE" id="PS50850">
    <property type="entry name" value="MFS"/>
    <property type="match status" value="1"/>
</dbReference>
<proteinExistence type="evidence at protein level"/>
<feature type="chain" id="PRO_0000439801" description="Glycerophosphocholine permease GIT4">
    <location>
        <begin position="1"/>
        <end position="532"/>
    </location>
</feature>
<feature type="transmembrane region" description="Helical" evidence="1">
    <location>
        <begin position="55"/>
        <end position="75"/>
    </location>
</feature>
<feature type="transmembrane region" description="Helical" evidence="1">
    <location>
        <begin position="98"/>
        <end position="118"/>
    </location>
</feature>
<feature type="transmembrane region" description="Helical" evidence="1">
    <location>
        <begin position="126"/>
        <end position="146"/>
    </location>
</feature>
<feature type="transmembrane region" description="Helical" evidence="1">
    <location>
        <begin position="150"/>
        <end position="170"/>
    </location>
</feature>
<feature type="transmembrane region" description="Helical" evidence="1">
    <location>
        <begin position="201"/>
        <end position="221"/>
    </location>
</feature>
<feature type="transmembrane region" description="Helical" evidence="1">
    <location>
        <begin position="229"/>
        <end position="249"/>
    </location>
</feature>
<feature type="transmembrane region" description="Helical" evidence="1">
    <location>
        <begin position="272"/>
        <end position="292"/>
    </location>
</feature>
<feature type="transmembrane region" description="Helical" evidence="1">
    <location>
        <begin position="321"/>
        <end position="341"/>
    </location>
</feature>
<feature type="transmembrane region" description="Helical" evidence="1">
    <location>
        <begin position="349"/>
        <end position="369"/>
    </location>
</feature>
<feature type="transmembrane region" description="Helical" evidence="1">
    <location>
        <begin position="375"/>
        <end position="395"/>
    </location>
</feature>
<feature type="transmembrane region" description="Helical" evidence="1">
    <location>
        <begin position="416"/>
        <end position="436"/>
    </location>
</feature>
<feature type="transmembrane region" description="Helical" evidence="1">
    <location>
        <begin position="450"/>
        <end position="470"/>
    </location>
</feature>
<feature type="glycosylation site" description="N-linked (GlcNAc...) asparagine" evidence="2">
    <location>
        <position position="266"/>
    </location>
</feature>
<feature type="glycosylation site" description="N-linked (GlcNAc...) asparagine" evidence="2">
    <location>
        <position position="314"/>
    </location>
</feature>
<feature type="glycosylation site" description="N-linked (GlcNAc...) asparagine" evidence="2">
    <location>
        <position position="396"/>
    </location>
</feature>
<gene>
    <name evidence="4" type="primary">GIT4</name>
    <name type="ordered locus">CAALFM_C500870CA</name>
</gene>
<accession>A0A1D8PN14</accession>
<keyword id="KW-1003">Cell membrane</keyword>
<keyword id="KW-0325">Glycoprotein</keyword>
<keyword id="KW-0472">Membrane</keyword>
<keyword id="KW-1185">Reference proteome</keyword>
<keyword id="KW-0812">Transmembrane</keyword>
<keyword id="KW-1133">Transmembrane helix</keyword>
<keyword id="KW-0813">Transport</keyword>
<keyword id="KW-0843">Virulence</keyword>
<organism>
    <name type="scientific">Candida albicans (strain SC5314 / ATCC MYA-2876)</name>
    <name type="common">Yeast</name>
    <dbReference type="NCBI Taxonomy" id="237561"/>
    <lineage>
        <taxon>Eukaryota</taxon>
        <taxon>Fungi</taxon>
        <taxon>Dikarya</taxon>
        <taxon>Ascomycota</taxon>
        <taxon>Saccharomycotina</taxon>
        <taxon>Pichiomycetes</taxon>
        <taxon>Debaryomycetaceae</taxon>
        <taxon>Candida/Lodderomyces clade</taxon>
        <taxon>Candida</taxon>
    </lineage>
</organism>